<name>MOBA_ALIF1</name>
<proteinExistence type="inferred from homology"/>
<evidence type="ECO:0000255" key="1">
    <source>
        <dbReference type="HAMAP-Rule" id="MF_00316"/>
    </source>
</evidence>
<organism>
    <name type="scientific">Aliivibrio fischeri (strain ATCC 700601 / ES114)</name>
    <name type="common">Vibrio fischeri</name>
    <dbReference type="NCBI Taxonomy" id="312309"/>
    <lineage>
        <taxon>Bacteria</taxon>
        <taxon>Pseudomonadati</taxon>
        <taxon>Pseudomonadota</taxon>
        <taxon>Gammaproteobacteria</taxon>
        <taxon>Vibrionales</taxon>
        <taxon>Vibrionaceae</taxon>
        <taxon>Aliivibrio</taxon>
    </lineage>
</organism>
<gene>
    <name evidence="1" type="primary">mobA</name>
    <name type="ordered locus">VF_1405</name>
</gene>
<accession>Q5E4Z6</accession>
<comment type="function">
    <text evidence="1">Transfers a GMP moiety from GTP to Mo-molybdopterin (Mo-MPT) cofactor (Moco or molybdenum cofactor) to form Mo-molybdopterin guanine dinucleotide (Mo-MGD) cofactor.</text>
</comment>
<comment type="catalytic activity">
    <reaction evidence="1">
        <text>Mo-molybdopterin + GTP + H(+) = Mo-molybdopterin guanine dinucleotide + diphosphate</text>
        <dbReference type="Rhea" id="RHEA:34243"/>
        <dbReference type="ChEBI" id="CHEBI:15378"/>
        <dbReference type="ChEBI" id="CHEBI:33019"/>
        <dbReference type="ChEBI" id="CHEBI:37565"/>
        <dbReference type="ChEBI" id="CHEBI:71302"/>
        <dbReference type="ChEBI" id="CHEBI:71310"/>
        <dbReference type="EC" id="2.7.7.77"/>
    </reaction>
</comment>
<comment type="cofactor">
    <cofactor evidence="1">
        <name>Mg(2+)</name>
        <dbReference type="ChEBI" id="CHEBI:18420"/>
    </cofactor>
</comment>
<comment type="subunit">
    <text evidence="1">Monomer.</text>
</comment>
<comment type="subcellular location">
    <subcellularLocation>
        <location evidence="1">Cytoplasm</location>
    </subcellularLocation>
</comment>
<comment type="domain">
    <text evidence="1">The N-terminal domain determines nucleotide recognition and specific binding, while the C-terminal domain determines the specific binding to the target protein.</text>
</comment>
<comment type="similarity">
    <text evidence="1">Belongs to the MobA family.</text>
</comment>
<dbReference type="EC" id="2.7.7.77" evidence="1"/>
<dbReference type="EMBL" id="CP000020">
    <property type="protein sequence ID" value="AAW85900.1"/>
    <property type="molecule type" value="Genomic_DNA"/>
</dbReference>
<dbReference type="RefSeq" id="WP_011261997.1">
    <property type="nucleotide sequence ID" value="NC_006840.2"/>
</dbReference>
<dbReference type="RefSeq" id="YP_204788.1">
    <property type="nucleotide sequence ID" value="NC_006840.2"/>
</dbReference>
<dbReference type="SMR" id="Q5E4Z6"/>
<dbReference type="STRING" id="312309.VF_1405"/>
<dbReference type="EnsemblBacteria" id="AAW85900">
    <property type="protein sequence ID" value="AAW85900"/>
    <property type="gene ID" value="VF_1405"/>
</dbReference>
<dbReference type="GeneID" id="54164077"/>
<dbReference type="KEGG" id="vfi:VF_1405"/>
<dbReference type="PATRIC" id="fig|312309.11.peg.1417"/>
<dbReference type="eggNOG" id="COG0746">
    <property type="taxonomic scope" value="Bacteria"/>
</dbReference>
<dbReference type="HOGENOM" id="CLU_055597_5_1_6"/>
<dbReference type="OrthoDB" id="9788394at2"/>
<dbReference type="Proteomes" id="UP000000537">
    <property type="component" value="Chromosome I"/>
</dbReference>
<dbReference type="GO" id="GO:0005737">
    <property type="term" value="C:cytoplasm"/>
    <property type="evidence" value="ECO:0007669"/>
    <property type="project" value="UniProtKB-SubCell"/>
</dbReference>
<dbReference type="GO" id="GO:0005525">
    <property type="term" value="F:GTP binding"/>
    <property type="evidence" value="ECO:0007669"/>
    <property type="project" value="UniProtKB-UniRule"/>
</dbReference>
<dbReference type="GO" id="GO:0046872">
    <property type="term" value="F:metal ion binding"/>
    <property type="evidence" value="ECO:0007669"/>
    <property type="project" value="UniProtKB-KW"/>
</dbReference>
<dbReference type="GO" id="GO:0061603">
    <property type="term" value="F:molybdenum cofactor guanylyltransferase activity"/>
    <property type="evidence" value="ECO:0007669"/>
    <property type="project" value="UniProtKB-EC"/>
</dbReference>
<dbReference type="GO" id="GO:1902758">
    <property type="term" value="P:bis(molybdopterin guanine dinucleotide)molybdenum biosynthetic process"/>
    <property type="evidence" value="ECO:0007669"/>
    <property type="project" value="TreeGrafter"/>
</dbReference>
<dbReference type="CDD" id="cd02503">
    <property type="entry name" value="MobA"/>
    <property type="match status" value="1"/>
</dbReference>
<dbReference type="Gene3D" id="3.90.550.10">
    <property type="entry name" value="Spore Coat Polysaccharide Biosynthesis Protein SpsA, Chain A"/>
    <property type="match status" value="1"/>
</dbReference>
<dbReference type="HAMAP" id="MF_00316">
    <property type="entry name" value="MobA"/>
    <property type="match status" value="1"/>
</dbReference>
<dbReference type="InterPro" id="IPR025877">
    <property type="entry name" value="MobA-like_NTP_Trfase"/>
</dbReference>
<dbReference type="InterPro" id="IPR013482">
    <property type="entry name" value="Molybde_CF_guanTrfase"/>
</dbReference>
<dbReference type="InterPro" id="IPR029044">
    <property type="entry name" value="Nucleotide-diphossugar_trans"/>
</dbReference>
<dbReference type="NCBIfam" id="TIGR02665">
    <property type="entry name" value="molyb_mobA"/>
    <property type="match status" value="1"/>
</dbReference>
<dbReference type="PANTHER" id="PTHR19136">
    <property type="entry name" value="MOLYBDENUM COFACTOR GUANYLYLTRANSFERASE"/>
    <property type="match status" value="1"/>
</dbReference>
<dbReference type="PANTHER" id="PTHR19136:SF81">
    <property type="entry name" value="MOLYBDENUM COFACTOR GUANYLYLTRANSFERASE"/>
    <property type="match status" value="1"/>
</dbReference>
<dbReference type="Pfam" id="PF12804">
    <property type="entry name" value="NTP_transf_3"/>
    <property type="match status" value="1"/>
</dbReference>
<dbReference type="SUPFAM" id="SSF53448">
    <property type="entry name" value="Nucleotide-diphospho-sugar transferases"/>
    <property type="match status" value="1"/>
</dbReference>
<sequence length="194" mass="21727">MLQPKQTSWVILAGGQARRMGGKDKGFVLFQDKALIEHALDTLTSQTDQIAINANRSIEEYSRYAVTFPDQFSEYPGPLAGMHSGLVNMNSDWVGFIPCDSPNLPNNLVSLLCNAVKEDTDIVVAHDGEYMQPVVTLMHKRIIPKIDAFLTRGDRKIILLYKECNTVFADFSDYPNAFINLNSPQELEQFGTLL</sequence>
<protein>
    <recommendedName>
        <fullName evidence="1">Molybdenum cofactor guanylyltransferase</fullName>
        <shortName evidence="1">MoCo guanylyltransferase</shortName>
        <ecNumber evidence="1">2.7.7.77</ecNumber>
    </recommendedName>
    <alternativeName>
        <fullName evidence="1">GTP:molybdopterin guanylyltransferase</fullName>
    </alternativeName>
    <alternativeName>
        <fullName evidence="1">Mo-MPT guanylyltransferase</fullName>
    </alternativeName>
    <alternativeName>
        <fullName evidence="1">Molybdopterin guanylyltransferase</fullName>
    </alternativeName>
    <alternativeName>
        <fullName evidence="1">Molybdopterin-guanine dinucleotide synthase</fullName>
        <shortName evidence="1">MGD synthase</shortName>
    </alternativeName>
</protein>
<keyword id="KW-0963">Cytoplasm</keyword>
<keyword id="KW-0342">GTP-binding</keyword>
<keyword id="KW-0460">Magnesium</keyword>
<keyword id="KW-0479">Metal-binding</keyword>
<keyword id="KW-0501">Molybdenum cofactor biosynthesis</keyword>
<keyword id="KW-0547">Nucleotide-binding</keyword>
<keyword id="KW-1185">Reference proteome</keyword>
<keyword id="KW-0808">Transferase</keyword>
<feature type="chain" id="PRO_1000019163" description="Molybdenum cofactor guanylyltransferase">
    <location>
        <begin position="1"/>
        <end position="194"/>
    </location>
</feature>
<feature type="binding site" evidence="1">
    <location>
        <begin position="12"/>
        <end position="14"/>
    </location>
    <ligand>
        <name>GTP</name>
        <dbReference type="ChEBI" id="CHEBI:37565"/>
    </ligand>
</feature>
<feature type="binding site" evidence="1">
    <location>
        <position position="25"/>
    </location>
    <ligand>
        <name>GTP</name>
        <dbReference type="ChEBI" id="CHEBI:37565"/>
    </ligand>
</feature>
<feature type="binding site" evidence="1">
    <location>
        <position position="53"/>
    </location>
    <ligand>
        <name>GTP</name>
        <dbReference type="ChEBI" id="CHEBI:37565"/>
    </ligand>
</feature>
<feature type="binding site" evidence="1">
    <location>
        <position position="70"/>
    </location>
    <ligand>
        <name>GTP</name>
        <dbReference type="ChEBI" id="CHEBI:37565"/>
    </ligand>
</feature>
<feature type="binding site" evidence="1">
    <location>
        <position position="100"/>
    </location>
    <ligand>
        <name>GTP</name>
        <dbReference type="ChEBI" id="CHEBI:37565"/>
    </ligand>
</feature>
<feature type="binding site" evidence="1">
    <location>
        <position position="100"/>
    </location>
    <ligand>
        <name>Mg(2+)</name>
        <dbReference type="ChEBI" id="CHEBI:18420"/>
    </ligand>
</feature>
<reference key="1">
    <citation type="journal article" date="2005" name="Proc. Natl. Acad. Sci. U.S.A.">
        <title>Complete genome sequence of Vibrio fischeri: a symbiotic bacterium with pathogenic congeners.</title>
        <authorList>
            <person name="Ruby E.G."/>
            <person name="Urbanowski M."/>
            <person name="Campbell J."/>
            <person name="Dunn A."/>
            <person name="Faini M."/>
            <person name="Gunsalus R."/>
            <person name="Lostroh P."/>
            <person name="Lupp C."/>
            <person name="McCann J."/>
            <person name="Millikan D."/>
            <person name="Schaefer A."/>
            <person name="Stabb E."/>
            <person name="Stevens A."/>
            <person name="Visick K."/>
            <person name="Whistler C."/>
            <person name="Greenberg E.P."/>
        </authorList>
    </citation>
    <scope>NUCLEOTIDE SEQUENCE [LARGE SCALE GENOMIC DNA]</scope>
    <source>
        <strain>ATCC 700601 / ES114</strain>
    </source>
</reference>